<name>PNP_AYWBP</name>
<reference key="1">
    <citation type="journal article" date="2006" name="J. Bacteriol.">
        <title>Living with genome instability: the adaptation of phytoplasmas to diverse environments of their insect and plant hosts.</title>
        <authorList>
            <person name="Bai X."/>
            <person name="Zhang J."/>
            <person name="Ewing A."/>
            <person name="Miller S.A."/>
            <person name="Jancso Radek A."/>
            <person name="Shevchenko D.V."/>
            <person name="Tsukerman K."/>
            <person name="Walunas T."/>
            <person name="Lapidus A."/>
            <person name="Campbell J.W."/>
            <person name="Hogenhout S.A."/>
        </authorList>
    </citation>
    <scope>NUCLEOTIDE SEQUENCE [LARGE SCALE GENOMIC DNA]</scope>
    <source>
        <strain>AYWB</strain>
    </source>
</reference>
<feature type="chain" id="PRO_0000329506" description="Polyribonucleotide nucleotidyltransferase">
    <location>
        <begin position="1"/>
        <end position="715"/>
    </location>
</feature>
<feature type="domain" description="KH" evidence="1">
    <location>
        <begin position="565"/>
        <end position="625"/>
    </location>
</feature>
<feature type="domain" description="S1 motif" evidence="1">
    <location>
        <begin position="635"/>
        <end position="709"/>
    </location>
</feature>
<feature type="binding site" evidence="1">
    <location>
        <position position="498"/>
    </location>
    <ligand>
        <name>Mg(2+)</name>
        <dbReference type="ChEBI" id="CHEBI:18420"/>
    </ligand>
</feature>
<feature type="binding site" evidence="1">
    <location>
        <position position="504"/>
    </location>
    <ligand>
        <name>Mg(2+)</name>
        <dbReference type="ChEBI" id="CHEBI:18420"/>
    </ligand>
</feature>
<sequence length="715" mass="80440">MLKKVFETTNLKDSFQVEIGTYARNVDSSILVRYQDTVVLTTMVFSRKPNNLDFLPLTVIYQEKLYAAGKIPGSFLRREGRSNDHEILTSRLIDRSLRPLFPDYFQQEVQVINTVLSLDPDFKSELASMLGSSLSLLISEIPFFEAISGVYVGKINNEFIINPTLQQLANSTLHLIVAGTKHNVTMIEAHANEVSEQDFLEAINFAHQYIKKLCLFQENIKQQFAPVKMTKTLHQTEQIQQQSFFAKNHSQVKQAILSCNSKNDLQQLKEQILDQAKQTPFFKTIDAITVFDYEAHKKHLQITENLFQKLSKQEMRSLILQEKIRPDKRELEEIRTLESQIDLLPRAHGSALFTRGKTQSLAAVTLGCLSESKIIDGLSDEQNKRFMLHYNFPPFSVGAVGRYTAPSRREIGHGTLAEKAISQVLPEEKDFPYTIRVVSEILESNGSSSQATVCSSSLALMASGVPLKKAVAGISVGLVFDQETNKYVILSDIQGLEDHVGDMDLKIAGTNKGITALQMDLKIQGIPFKILQEAFLQAKKGRLHILEQMNQTISQPRLEVSKYAPKVCMMQIKPEKIRDIIGSGGKIINQIIESHDGVKIDIEQDGRVFVMHSNLETVKKTVAFIESLIQEIQVGTCYQASILRFLSDKQGKMIGAVAQVCPGIEGLIHVNKMKFQKITDVLKIGETVLVKCTKINERGRIDFLLLPKKTQEKNS</sequence>
<accession>Q2NJ06</accession>
<protein>
    <recommendedName>
        <fullName evidence="1">Polyribonucleotide nucleotidyltransferase</fullName>
        <ecNumber evidence="1">2.7.7.8</ecNumber>
    </recommendedName>
    <alternativeName>
        <fullName evidence="1">Polynucleotide phosphorylase</fullName>
        <shortName evidence="1">PNPase</shortName>
    </alternativeName>
</protein>
<gene>
    <name evidence="1" type="primary">pnp</name>
    <name type="ordered locus">AYWB_470</name>
</gene>
<organism>
    <name type="scientific">Aster yellows witches'-broom phytoplasma (strain AYWB)</name>
    <dbReference type="NCBI Taxonomy" id="322098"/>
    <lineage>
        <taxon>Bacteria</taxon>
        <taxon>Bacillati</taxon>
        <taxon>Mycoplasmatota</taxon>
        <taxon>Mollicutes</taxon>
        <taxon>Acholeplasmatales</taxon>
        <taxon>Acholeplasmataceae</taxon>
        <taxon>Candidatus Phytoplasma</taxon>
        <taxon>16SrI (Aster yellows group)</taxon>
    </lineage>
</organism>
<dbReference type="EC" id="2.7.7.8" evidence="1"/>
<dbReference type="EMBL" id="CP000061">
    <property type="protein sequence ID" value="ABC65587.1"/>
    <property type="molecule type" value="Genomic_DNA"/>
</dbReference>
<dbReference type="RefSeq" id="WP_011412751.1">
    <property type="nucleotide sequence ID" value="NC_007716.1"/>
</dbReference>
<dbReference type="SMR" id="Q2NJ06"/>
<dbReference type="STRING" id="322098.AYWB_470"/>
<dbReference type="KEGG" id="ayw:AYWB_470"/>
<dbReference type="eggNOG" id="COG1185">
    <property type="taxonomic scope" value="Bacteria"/>
</dbReference>
<dbReference type="HOGENOM" id="CLU_004217_2_2_14"/>
<dbReference type="OrthoDB" id="9804305at2"/>
<dbReference type="PhylomeDB" id="Q2NJ06"/>
<dbReference type="Proteomes" id="UP000001934">
    <property type="component" value="Chromosome"/>
</dbReference>
<dbReference type="GO" id="GO:0005829">
    <property type="term" value="C:cytosol"/>
    <property type="evidence" value="ECO:0007669"/>
    <property type="project" value="TreeGrafter"/>
</dbReference>
<dbReference type="GO" id="GO:0000175">
    <property type="term" value="F:3'-5'-RNA exonuclease activity"/>
    <property type="evidence" value="ECO:0007669"/>
    <property type="project" value="TreeGrafter"/>
</dbReference>
<dbReference type="GO" id="GO:0000287">
    <property type="term" value="F:magnesium ion binding"/>
    <property type="evidence" value="ECO:0007669"/>
    <property type="project" value="UniProtKB-UniRule"/>
</dbReference>
<dbReference type="GO" id="GO:0004654">
    <property type="term" value="F:polyribonucleotide nucleotidyltransferase activity"/>
    <property type="evidence" value="ECO:0007669"/>
    <property type="project" value="UniProtKB-UniRule"/>
</dbReference>
<dbReference type="GO" id="GO:0003723">
    <property type="term" value="F:RNA binding"/>
    <property type="evidence" value="ECO:0007669"/>
    <property type="project" value="UniProtKB-UniRule"/>
</dbReference>
<dbReference type="GO" id="GO:0006402">
    <property type="term" value="P:mRNA catabolic process"/>
    <property type="evidence" value="ECO:0007669"/>
    <property type="project" value="UniProtKB-UniRule"/>
</dbReference>
<dbReference type="CDD" id="cd02393">
    <property type="entry name" value="KH-I_PNPase"/>
    <property type="match status" value="1"/>
</dbReference>
<dbReference type="CDD" id="cd11364">
    <property type="entry name" value="RNase_PH_PNPase_2"/>
    <property type="match status" value="1"/>
</dbReference>
<dbReference type="FunFam" id="3.30.1370.10:FF:000001">
    <property type="entry name" value="Polyribonucleotide nucleotidyltransferase"/>
    <property type="match status" value="1"/>
</dbReference>
<dbReference type="FunFam" id="3.30.230.70:FF:000001">
    <property type="entry name" value="Polyribonucleotide nucleotidyltransferase"/>
    <property type="match status" value="1"/>
</dbReference>
<dbReference type="FunFam" id="3.30.230.70:FF:000002">
    <property type="entry name" value="Polyribonucleotide nucleotidyltransferase"/>
    <property type="match status" value="1"/>
</dbReference>
<dbReference type="Gene3D" id="3.30.230.70">
    <property type="entry name" value="GHMP Kinase, N-terminal domain"/>
    <property type="match status" value="2"/>
</dbReference>
<dbReference type="Gene3D" id="3.30.1370.10">
    <property type="entry name" value="K Homology domain, type 1"/>
    <property type="match status" value="1"/>
</dbReference>
<dbReference type="Gene3D" id="2.40.50.140">
    <property type="entry name" value="Nucleic acid-binding proteins"/>
    <property type="match status" value="1"/>
</dbReference>
<dbReference type="HAMAP" id="MF_01595">
    <property type="entry name" value="PNPase"/>
    <property type="match status" value="1"/>
</dbReference>
<dbReference type="InterPro" id="IPR001247">
    <property type="entry name" value="ExoRNase_PH_dom1"/>
</dbReference>
<dbReference type="InterPro" id="IPR015847">
    <property type="entry name" value="ExoRNase_PH_dom2"/>
</dbReference>
<dbReference type="InterPro" id="IPR036345">
    <property type="entry name" value="ExoRNase_PH_dom2_sf"/>
</dbReference>
<dbReference type="InterPro" id="IPR004087">
    <property type="entry name" value="KH_dom"/>
</dbReference>
<dbReference type="InterPro" id="IPR004088">
    <property type="entry name" value="KH_dom_type_1"/>
</dbReference>
<dbReference type="InterPro" id="IPR036612">
    <property type="entry name" value="KH_dom_type_1_sf"/>
</dbReference>
<dbReference type="InterPro" id="IPR012340">
    <property type="entry name" value="NA-bd_OB-fold"/>
</dbReference>
<dbReference type="InterPro" id="IPR012162">
    <property type="entry name" value="PNPase"/>
</dbReference>
<dbReference type="InterPro" id="IPR027408">
    <property type="entry name" value="PNPase/RNase_PH_dom_sf"/>
</dbReference>
<dbReference type="InterPro" id="IPR020568">
    <property type="entry name" value="Ribosomal_Su5_D2-typ_SF"/>
</dbReference>
<dbReference type="InterPro" id="IPR003029">
    <property type="entry name" value="S1_domain"/>
</dbReference>
<dbReference type="NCBIfam" id="TIGR03591">
    <property type="entry name" value="polynuc_phos"/>
    <property type="match status" value="1"/>
</dbReference>
<dbReference type="NCBIfam" id="NF008805">
    <property type="entry name" value="PRK11824.1"/>
    <property type="match status" value="1"/>
</dbReference>
<dbReference type="PANTHER" id="PTHR11252">
    <property type="entry name" value="POLYRIBONUCLEOTIDE NUCLEOTIDYLTRANSFERASE"/>
    <property type="match status" value="1"/>
</dbReference>
<dbReference type="PANTHER" id="PTHR11252:SF0">
    <property type="entry name" value="POLYRIBONUCLEOTIDE NUCLEOTIDYLTRANSFERASE 1, MITOCHONDRIAL"/>
    <property type="match status" value="1"/>
</dbReference>
<dbReference type="Pfam" id="PF00013">
    <property type="entry name" value="KH_1"/>
    <property type="match status" value="1"/>
</dbReference>
<dbReference type="Pfam" id="PF01138">
    <property type="entry name" value="RNase_PH"/>
    <property type="match status" value="2"/>
</dbReference>
<dbReference type="Pfam" id="PF03725">
    <property type="entry name" value="RNase_PH_C"/>
    <property type="match status" value="1"/>
</dbReference>
<dbReference type="PIRSF" id="PIRSF005499">
    <property type="entry name" value="PNPase"/>
    <property type="match status" value="1"/>
</dbReference>
<dbReference type="SMART" id="SM00322">
    <property type="entry name" value="KH"/>
    <property type="match status" value="1"/>
</dbReference>
<dbReference type="SMART" id="SM00316">
    <property type="entry name" value="S1"/>
    <property type="match status" value="1"/>
</dbReference>
<dbReference type="SUPFAM" id="SSF54791">
    <property type="entry name" value="Eukaryotic type KH-domain (KH-domain type I)"/>
    <property type="match status" value="1"/>
</dbReference>
<dbReference type="SUPFAM" id="SSF50249">
    <property type="entry name" value="Nucleic acid-binding proteins"/>
    <property type="match status" value="1"/>
</dbReference>
<dbReference type="SUPFAM" id="SSF55666">
    <property type="entry name" value="Ribonuclease PH domain 2-like"/>
    <property type="match status" value="2"/>
</dbReference>
<dbReference type="SUPFAM" id="SSF54211">
    <property type="entry name" value="Ribosomal protein S5 domain 2-like"/>
    <property type="match status" value="2"/>
</dbReference>
<dbReference type="PROSITE" id="PS50084">
    <property type="entry name" value="KH_TYPE_1"/>
    <property type="match status" value="1"/>
</dbReference>
<dbReference type="PROSITE" id="PS50126">
    <property type="entry name" value="S1"/>
    <property type="match status" value="1"/>
</dbReference>
<comment type="function">
    <text evidence="1">Involved in mRNA degradation. Catalyzes the phosphorolysis of single-stranded polyribonucleotides processively in the 3'- to 5'-direction.</text>
</comment>
<comment type="catalytic activity">
    <reaction evidence="1">
        <text>RNA(n+1) + phosphate = RNA(n) + a ribonucleoside 5'-diphosphate</text>
        <dbReference type="Rhea" id="RHEA:22096"/>
        <dbReference type="Rhea" id="RHEA-COMP:14527"/>
        <dbReference type="Rhea" id="RHEA-COMP:17342"/>
        <dbReference type="ChEBI" id="CHEBI:43474"/>
        <dbReference type="ChEBI" id="CHEBI:57930"/>
        <dbReference type="ChEBI" id="CHEBI:140395"/>
        <dbReference type="EC" id="2.7.7.8"/>
    </reaction>
</comment>
<comment type="cofactor">
    <cofactor evidence="1">
        <name>Mg(2+)</name>
        <dbReference type="ChEBI" id="CHEBI:18420"/>
    </cofactor>
</comment>
<comment type="subcellular location">
    <subcellularLocation>
        <location evidence="1">Cytoplasm</location>
    </subcellularLocation>
</comment>
<comment type="similarity">
    <text evidence="1">Belongs to the polyribonucleotide nucleotidyltransferase family.</text>
</comment>
<evidence type="ECO:0000255" key="1">
    <source>
        <dbReference type="HAMAP-Rule" id="MF_01595"/>
    </source>
</evidence>
<proteinExistence type="inferred from homology"/>
<keyword id="KW-0963">Cytoplasm</keyword>
<keyword id="KW-0460">Magnesium</keyword>
<keyword id="KW-0479">Metal-binding</keyword>
<keyword id="KW-0548">Nucleotidyltransferase</keyword>
<keyword id="KW-0694">RNA-binding</keyword>
<keyword id="KW-0808">Transferase</keyword>